<protein>
    <recommendedName>
        <fullName>Flagella synthesis protein FlgN</fullName>
    </recommendedName>
</protein>
<reference key="1">
    <citation type="journal article" date="1994" name="J. Bacteriol.">
        <title>Mutation of flgM attenuates virulence of Salmonella typhimurium, and mutation of fliA represses the attenuated phenotype.</title>
        <authorList>
            <person name="Schmitt C.K."/>
            <person name="Darnell S.C."/>
            <person name="Tesh V.L."/>
            <person name="Stocker B.A.D."/>
            <person name="O'Brien A.D."/>
        </authorList>
    </citation>
    <scope>NUCLEOTIDE SEQUENCE [GENOMIC DNA]</scope>
    <source>
        <strain>LT2</strain>
    </source>
</reference>
<reference key="2">
    <citation type="journal article" date="1994" name="Gene">
        <title>Sequence analysis of the flgA gene and its adjacent region in Salmonella typhimurium, and identification of another flagellar gene, flgN.</title>
        <authorList>
            <person name="Kutsukake K."/>
            <person name="Okada T."/>
            <person name="Yokoseki T."/>
            <person name="Iino T."/>
        </authorList>
    </citation>
    <scope>NUCLEOTIDE SEQUENCE [GENOMIC DNA]</scope>
    <source>
        <strain>LT2</strain>
    </source>
</reference>
<reference key="3">
    <citation type="journal article" date="2001" name="Nature">
        <title>Complete genome sequence of Salmonella enterica serovar Typhimurium LT2.</title>
        <authorList>
            <person name="McClelland M."/>
            <person name="Sanderson K.E."/>
            <person name="Spieth J."/>
            <person name="Clifton S.W."/>
            <person name="Latreille P."/>
            <person name="Courtney L."/>
            <person name="Porwollik S."/>
            <person name="Ali J."/>
            <person name="Dante M."/>
            <person name="Du F."/>
            <person name="Hou S."/>
            <person name="Layman D."/>
            <person name="Leonard S."/>
            <person name="Nguyen C."/>
            <person name="Scott K."/>
            <person name="Holmes A."/>
            <person name="Grewal N."/>
            <person name="Mulvaney E."/>
            <person name="Ryan E."/>
            <person name="Sun H."/>
            <person name="Florea L."/>
            <person name="Miller W."/>
            <person name="Stoneking T."/>
            <person name="Nhan M."/>
            <person name="Waterston R."/>
            <person name="Wilson R.K."/>
        </authorList>
    </citation>
    <scope>NUCLEOTIDE SEQUENCE [LARGE SCALE GENOMIC DNA]</scope>
    <source>
        <strain>LT2 / SGSC1412 / ATCC 700720</strain>
    </source>
</reference>
<reference key="4">
    <citation type="journal article" date="1991" name="J. Bacteriol.">
        <title>Molecular characterization of flgM, a gene encoding a negative regulator of flagellin synthesis in Salmonella typhimurium.</title>
        <authorList>
            <person name="Gillen K.L."/>
            <person name="Hughes K.T."/>
        </authorList>
    </citation>
    <scope>NUCLEOTIDE SEQUENCE [GENOMIC DNA] OF 1-65</scope>
    <source>
        <strain>LT2</strain>
    </source>
</reference>
<gene>
    <name type="primary">flgN</name>
    <name type="ordered locus">STM1171</name>
</gene>
<proteinExistence type="evidence at protein level"/>
<keyword id="KW-0002">3D-structure</keyword>
<keyword id="KW-1005">Bacterial flagellum biogenesis</keyword>
<keyword id="KW-0963">Cytoplasm</keyword>
<keyword id="KW-1185">Reference proteome</keyword>
<name>FLGN_SALTY</name>
<sequence length="140" mass="15989">MTRLSEILDQMTTVLNDLKTVMDAEQQQLSVGQINGSQLQRITEEKSSLLATLDYLEQQRRLEQNAQRSANDDIAERWQAITEKTQHLRDLNQHNGWLLEGQIERNQQALEVLKPHQEPTLYGADGQTSVSHRGGKKISI</sequence>
<feature type="chain" id="PRO_0000180869" description="Flagella synthesis protein FlgN">
    <location>
        <begin position="1"/>
        <end position="140"/>
    </location>
</feature>
<feature type="region of interest" description="Disordered" evidence="1">
    <location>
        <begin position="119"/>
        <end position="140"/>
    </location>
</feature>
<feature type="sequence conflict" description="In Ref. 2; BAA04979." evidence="2" ref="2">
    <original>QR</original>
    <variation>HG</variation>
    <location>
        <begin position="67"/>
        <end position="68"/>
    </location>
</feature>
<feature type="helix" evidence="3">
    <location>
        <begin position="3"/>
        <end position="29"/>
    </location>
</feature>
<feature type="helix" evidence="3">
    <location>
        <begin position="38"/>
        <end position="62"/>
    </location>
</feature>
<feature type="strand" evidence="3">
    <location>
        <begin position="64"/>
        <end position="66"/>
    </location>
</feature>
<feature type="helix" evidence="3">
    <location>
        <begin position="74"/>
        <end position="113"/>
    </location>
</feature>
<evidence type="ECO:0000256" key="1">
    <source>
        <dbReference type="SAM" id="MobiDB-lite"/>
    </source>
</evidence>
<evidence type="ECO:0000305" key="2"/>
<evidence type="ECO:0007829" key="3">
    <source>
        <dbReference type="PDB" id="5B3D"/>
    </source>
</evidence>
<organism>
    <name type="scientific">Salmonella typhimurium (strain LT2 / SGSC1412 / ATCC 700720)</name>
    <dbReference type="NCBI Taxonomy" id="99287"/>
    <lineage>
        <taxon>Bacteria</taxon>
        <taxon>Pseudomonadati</taxon>
        <taxon>Pseudomonadota</taxon>
        <taxon>Gammaproteobacteria</taxon>
        <taxon>Enterobacterales</taxon>
        <taxon>Enterobacteriaceae</taxon>
        <taxon>Salmonella</taxon>
    </lineage>
</organism>
<accession>P0A1J7</accession>
<accession>P37406</accession>
<comment type="function">
    <text>Required for the efficient initiation of filament assembly.</text>
</comment>
<comment type="interaction">
    <interactant intactId="EBI-15610533">
        <id>P0A1J7</id>
    </interactant>
    <interactant intactId="EBI-15610547">
        <id>P0A1J5</id>
        <label>flgK</label>
    </interactant>
    <organismsDiffer>false</organismsDiffer>
    <experiments>3</experiments>
</comment>
<comment type="interaction">
    <interactant intactId="EBI-15610533">
        <id>P0A1J7</id>
    </interactant>
    <interactant intactId="EBI-6410293">
        <id>P0A1K1</id>
        <label>fliJ</label>
    </interactant>
    <organismsDiffer>false</organismsDiffer>
    <experiments>8</experiments>
</comment>
<comment type="subcellular location">
    <subcellularLocation>
        <location evidence="2">Cytoplasm</location>
    </subcellularLocation>
</comment>
<comment type="similarity">
    <text evidence="2">Belongs to the FlgN family.</text>
</comment>
<dbReference type="EMBL" id="U03631">
    <property type="protein sequence ID" value="AAC38037.1"/>
    <property type="molecule type" value="Unassigned_DNA"/>
</dbReference>
<dbReference type="EMBL" id="D25292">
    <property type="protein sequence ID" value="BAA04979.1"/>
    <property type="molecule type" value="Genomic_DNA"/>
</dbReference>
<dbReference type="EMBL" id="AE006468">
    <property type="protein sequence ID" value="AAL20101.1"/>
    <property type="molecule type" value="Genomic_DNA"/>
</dbReference>
<dbReference type="EMBL" id="M74222">
    <property type="status" value="NOT_ANNOTATED_CDS"/>
    <property type="molecule type" value="Genomic_DNA"/>
</dbReference>
<dbReference type="PIR" id="B36945">
    <property type="entry name" value="B36945"/>
</dbReference>
<dbReference type="RefSeq" id="NP_460142.1">
    <property type="nucleotide sequence ID" value="NC_003197.2"/>
</dbReference>
<dbReference type="RefSeq" id="WP_000197547.1">
    <property type="nucleotide sequence ID" value="NC_003197.2"/>
</dbReference>
<dbReference type="PDB" id="5B3D">
    <property type="method" value="X-ray"/>
    <property type="resolution" value="2.30 A"/>
    <property type="chains" value="A/B/C/D=1-140"/>
</dbReference>
<dbReference type="PDB" id="8FTX">
    <property type="method" value="NMR"/>
    <property type="chains" value="A=1-140"/>
</dbReference>
<dbReference type="PDBsum" id="5B3D"/>
<dbReference type="PDBsum" id="8FTX"/>
<dbReference type="SMR" id="P0A1J7"/>
<dbReference type="DIP" id="DIP-61312N"/>
<dbReference type="IntAct" id="P0A1J7">
    <property type="interactions" value="4"/>
</dbReference>
<dbReference type="STRING" id="99287.STM1171"/>
<dbReference type="PaxDb" id="99287-STM1171"/>
<dbReference type="DNASU" id="1252689"/>
<dbReference type="GeneID" id="1252689"/>
<dbReference type="KEGG" id="stm:STM1171"/>
<dbReference type="PATRIC" id="fig|99287.12.peg.1239"/>
<dbReference type="HOGENOM" id="CLU_137423_2_1_6"/>
<dbReference type="OMA" id="HIEHNTQ"/>
<dbReference type="PhylomeDB" id="P0A1J7"/>
<dbReference type="BioCyc" id="SENT99287:STM1171-MONOMER"/>
<dbReference type="Proteomes" id="UP000001014">
    <property type="component" value="Chromosome"/>
</dbReference>
<dbReference type="GO" id="GO:0005737">
    <property type="term" value="C:cytoplasm"/>
    <property type="evidence" value="ECO:0007669"/>
    <property type="project" value="UniProtKB-SubCell"/>
</dbReference>
<dbReference type="GO" id="GO:0044780">
    <property type="term" value="P:bacterial-type flagellum assembly"/>
    <property type="evidence" value="ECO:0007669"/>
    <property type="project" value="InterPro"/>
</dbReference>
<dbReference type="Gene3D" id="1.20.58.300">
    <property type="entry name" value="FlgN-like"/>
    <property type="match status" value="1"/>
</dbReference>
<dbReference type="InterPro" id="IPR007809">
    <property type="entry name" value="FlgN-like"/>
</dbReference>
<dbReference type="InterPro" id="IPR036679">
    <property type="entry name" value="FlgN-like_sf"/>
</dbReference>
<dbReference type="NCBIfam" id="NF012003">
    <property type="entry name" value="PRK15459.1"/>
    <property type="match status" value="1"/>
</dbReference>
<dbReference type="Pfam" id="PF05130">
    <property type="entry name" value="FlgN"/>
    <property type="match status" value="1"/>
</dbReference>
<dbReference type="SUPFAM" id="SSF140566">
    <property type="entry name" value="FlgN-like"/>
    <property type="match status" value="1"/>
</dbReference>